<comment type="function">
    <text evidence="3">Involved in the phloem transport of iron and manganese and their translocation into the grain. Transports iron- and manganese-nicotianamine chelates, but not iron-phytosiderophore.</text>
</comment>
<comment type="subcellular location">
    <subcellularLocation>
        <location evidence="5">Cell membrane</location>
        <topology evidence="5">Multi-pass membrane protein</topology>
    </subcellularLocation>
</comment>
<comment type="tissue specificity">
    <text evidence="3">Expressed in phloem cells of vascular bundles in leaves and leaf sheaths. Expressed at low levels in phloem companion cells in the central cylinder of roots, but not in the epidermal or cortical cells.</text>
</comment>
<comment type="developmental stage">
    <text evidence="3">Before anthesis, expressed in the vascular bundles of spikelets and at low levels in the central region of anthers. After fertilization, expression in bundles increases especially in the upper part of the husk. At 5 days after anthesis, highly expressed in the developing ovary and 3 days later in the developing embryo and outer layer of the endosperm. From 20 to 30 days after anthesis, expressed in mature embryo and peripheral layer of the endosperm.</text>
</comment>
<comment type="induction">
    <text evidence="3">In leaves by iron deficiency.</text>
</comment>
<comment type="similarity">
    <text evidence="4">Belongs to the YSL (TC 2.A.67.2) family.</text>
</comment>
<comment type="sequence caution" evidence="4">
    <conflict type="erroneous gene model prediction">
        <sequence resource="EMBL-CDS" id="BAD25583"/>
    </conflict>
</comment>
<comment type="sequence caution" evidence="4">
    <conflict type="erroneous gene model prediction">
        <sequence resource="EMBL-CDS" id="BAD26553"/>
    </conflict>
</comment>
<feature type="chain" id="PRO_0000363865" description="Metal-nicotianamine transporter YSL2">
    <location>
        <begin position="1"/>
        <end position="674"/>
    </location>
</feature>
<feature type="transmembrane region" description="Helical" evidence="1">
    <location>
        <begin position="41"/>
        <end position="61"/>
    </location>
</feature>
<feature type="transmembrane region" description="Helical" evidence="1">
    <location>
        <begin position="64"/>
        <end position="84"/>
    </location>
</feature>
<feature type="transmembrane region" description="Helical" evidence="1">
    <location>
        <begin position="118"/>
        <end position="138"/>
    </location>
</feature>
<feature type="transmembrane region" description="Helical" evidence="1">
    <location>
        <begin position="162"/>
        <end position="182"/>
    </location>
</feature>
<feature type="transmembrane region" description="Helical" evidence="1">
    <location>
        <begin position="224"/>
        <end position="244"/>
    </location>
</feature>
<feature type="transmembrane region" description="Helical" evidence="1">
    <location>
        <begin position="283"/>
        <end position="303"/>
    </location>
</feature>
<feature type="transmembrane region" description="Helical" evidence="1">
    <location>
        <begin position="329"/>
        <end position="349"/>
    </location>
</feature>
<feature type="transmembrane region" description="Helical" evidence="1">
    <location>
        <begin position="392"/>
        <end position="412"/>
    </location>
</feature>
<feature type="transmembrane region" description="Helical" evidence="1">
    <location>
        <begin position="420"/>
        <end position="440"/>
    </location>
</feature>
<feature type="transmembrane region" description="Helical" evidence="1">
    <location>
        <begin position="452"/>
        <end position="472"/>
    </location>
</feature>
<feature type="transmembrane region" description="Helical" evidence="1">
    <location>
        <begin position="506"/>
        <end position="526"/>
    </location>
</feature>
<feature type="transmembrane region" description="Helical" evidence="1">
    <location>
        <begin position="559"/>
        <end position="579"/>
    </location>
</feature>
<feature type="transmembrane region" description="Helical" evidence="1">
    <location>
        <begin position="604"/>
        <end position="624"/>
    </location>
</feature>
<feature type="transmembrane region" description="Helical" evidence="1">
    <location>
        <begin position="633"/>
        <end position="653"/>
    </location>
</feature>
<feature type="region of interest" description="Disordered" evidence="2">
    <location>
        <begin position="1"/>
        <end position="29"/>
    </location>
</feature>
<feature type="compositionally biased region" description="Basic and acidic residues" evidence="2">
    <location>
        <begin position="7"/>
        <end position="22"/>
    </location>
</feature>
<feature type="sequence conflict" description="In Ref. 1; BAD90812/BAD72770." evidence="4" ref="1">
    <original>R</original>
    <variation>W</variation>
    <location>
        <position position="103"/>
    </location>
</feature>
<name>YSL2_ORYSJ</name>
<keyword id="KW-1003">Cell membrane</keyword>
<keyword id="KW-0406">Ion transport</keyword>
<keyword id="KW-0408">Iron</keyword>
<keyword id="KW-0410">Iron transport</keyword>
<keyword id="KW-0472">Membrane</keyword>
<keyword id="KW-1185">Reference proteome</keyword>
<keyword id="KW-0812">Transmembrane</keyword>
<keyword id="KW-1133">Transmembrane helix</keyword>
<keyword id="KW-0813">Transport</keyword>
<gene>
    <name type="primary">YSL2</name>
    <name type="ordered locus">Os02g0649900</name>
    <name type="ordered locus">LOC_Os02g43370</name>
    <name type="ORF">OSJNBb0012J10.2</name>
    <name type="ORF">P0048B08.26</name>
</gene>
<proteinExistence type="evidence at transcript level"/>
<organism>
    <name type="scientific">Oryza sativa subsp. japonica</name>
    <name type="common">Rice</name>
    <dbReference type="NCBI Taxonomy" id="39947"/>
    <lineage>
        <taxon>Eukaryota</taxon>
        <taxon>Viridiplantae</taxon>
        <taxon>Streptophyta</taxon>
        <taxon>Embryophyta</taxon>
        <taxon>Tracheophyta</taxon>
        <taxon>Spermatophyta</taxon>
        <taxon>Magnoliopsida</taxon>
        <taxon>Liliopsida</taxon>
        <taxon>Poales</taxon>
        <taxon>Poaceae</taxon>
        <taxon>BOP clade</taxon>
        <taxon>Oryzoideae</taxon>
        <taxon>Oryzeae</taxon>
        <taxon>Oryzinae</taxon>
        <taxon>Oryza</taxon>
        <taxon>Oryza sativa</taxon>
    </lineage>
</organism>
<sequence length="674" mass="73343">MEAAAPEIERCDAGDVESDHDGAAAAAERVPPWREQVTARGMVAALLIGFVYTVIIMKLALTTGIIPTLNVSAALLAFLALRGWTRAPALLLPGGGAASSSSRRRPFTRQENTVVQTCAVACYTMGFGGGFGSSLLALNRKTYELAGVSTPGNSPGSYKEPGVGWMTGFLFAISFVGLLNLLPLRKALIIDYKLTYPSGTATAVLINGFHTPQGENSAKKQVRGFLNCFGISLLWSFFQWFYTGGESCGFLQFPTFGLKAWKQTFYFDFSLTYVGAGMICSHLVNLSALFGAILSWGIMWPLISIQKGKWYPGNVPESSMTSLFGYKSFMCVALIMGDGLYHFIKVTGITAKSLHERSNRRHAKKATDEDTFVIADMQRDEFFNKDYIPNWLAYAGYALLSIVAVIAIPIMFQQVKWYYVVVAFVLAPVLGFSNAYGTGLTDMNMSYNYGKIALFIFAAWGGRDNGVIAGLVGCGIVKQLVQVSADLMHDFKTGHLTLTSPRSMLVGQAIGTAMGCIIAPLTFLLFYKAFDIGNPDGYWKAPYALIFRNMAILGVEGFSALPKHCLELSAGFFAFSVLINLMRDFLPRKYRDYVPLPTAMAVPFLVGANFAIDMCVGSLIVFAWHKINSKESALLVPAVASGFICGDGIWMFPSSLLSLAKVKPPICMKFTPGS</sequence>
<reference key="1">
    <citation type="journal article" date="2004" name="Plant J.">
        <title>OsYSL2 is a rice metal-nicotianamine transporter that is regulated by iron and expressed in the phloem.</title>
        <authorList>
            <person name="Koike S."/>
            <person name="Inoue H."/>
            <person name="Mizuno D."/>
            <person name="Takahashi M."/>
            <person name="Nakanishi H."/>
            <person name="Mori S."/>
            <person name="Nishizawa N.K."/>
        </authorList>
    </citation>
    <scope>NUCLEOTIDE SEQUENCE [MRNA]</scope>
    <scope>FUNCTION</scope>
    <scope>SUBCELLULAR LOCATION</scope>
    <scope>TISSUE SPECIFICITY</scope>
    <scope>DEVELOPMENTAL STAGE</scope>
    <scope>INDUCTION</scope>
    <scope>GENE FAMILY</scope>
    <scope>NOMENCLATURE</scope>
    <source>
        <strain>cv. Nipponbare</strain>
    </source>
</reference>
<reference key="2">
    <citation type="journal article" date="2005" name="Nature">
        <title>The map-based sequence of the rice genome.</title>
        <authorList>
            <consortium name="International rice genome sequencing project (IRGSP)"/>
        </authorList>
    </citation>
    <scope>NUCLEOTIDE SEQUENCE [LARGE SCALE GENOMIC DNA]</scope>
    <source>
        <strain>cv. Nipponbare</strain>
    </source>
</reference>
<reference key="3">
    <citation type="journal article" date="2008" name="Nucleic Acids Res.">
        <title>The rice annotation project database (RAP-DB): 2008 update.</title>
        <authorList>
            <consortium name="The rice annotation project (RAP)"/>
        </authorList>
    </citation>
    <scope>GENOME REANNOTATION</scope>
    <source>
        <strain>cv. Nipponbare</strain>
    </source>
</reference>
<reference key="4">
    <citation type="journal article" date="2013" name="Rice">
        <title>Improvement of the Oryza sativa Nipponbare reference genome using next generation sequence and optical map data.</title>
        <authorList>
            <person name="Kawahara Y."/>
            <person name="de la Bastide M."/>
            <person name="Hamilton J.P."/>
            <person name="Kanamori H."/>
            <person name="McCombie W.R."/>
            <person name="Ouyang S."/>
            <person name="Schwartz D.C."/>
            <person name="Tanaka T."/>
            <person name="Wu J."/>
            <person name="Zhou S."/>
            <person name="Childs K.L."/>
            <person name="Davidson R.M."/>
            <person name="Lin H."/>
            <person name="Quesada-Ocampo L."/>
            <person name="Vaillancourt B."/>
            <person name="Sakai H."/>
            <person name="Lee S.S."/>
            <person name="Kim J."/>
            <person name="Numa H."/>
            <person name="Itoh T."/>
            <person name="Buell C.R."/>
            <person name="Matsumoto T."/>
        </authorList>
    </citation>
    <scope>GENOME REANNOTATION</scope>
    <source>
        <strain>cv. Nipponbare</strain>
    </source>
</reference>
<evidence type="ECO:0000255" key="1"/>
<evidence type="ECO:0000256" key="2">
    <source>
        <dbReference type="SAM" id="MobiDB-lite"/>
    </source>
</evidence>
<evidence type="ECO:0000269" key="3">
    <source>
    </source>
</evidence>
<evidence type="ECO:0000305" key="4"/>
<evidence type="ECO:0000305" key="5">
    <source>
    </source>
</evidence>
<protein>
    <recommendedName>
        <fullName>Metal-nicotianamine transporter YSL2</fullName>
    </recommendedName>
    <alternativeName>
        <fullName>Protein YELLOW STRIPE LIKE 2</fullName>
        <shortName>OsYSL2</shortName>
    </alternativeName>
</protein>
<accession>Q6H3Z6</accession>
<accession>A0A0P0VMG1</accession>
<accession>Q5TM89</accession>
<dbReference type="EMBL" id="AB126253">
    <property type="protein sequence ID" value="BAD72770.1"/>
    <property type="molecule type" value="mRNA"/>
</dbReference>
<dbReference type="EMBL" id="AB164646">
    <property type="protein sequence ID" value="BAD90812.1"/>
    <property type="molecule type" value="mRNA"/>
</dbReference>
<dbReference type="EMBL" id="AP004868">
    <property type="protein sequence ID" value="BAD25583.1"/>
    <property type="status" value="ALT_SEQ"/>
    <property type="molecule type" value="Genomic_DNA"/>
</dbReference>
<dbReference type="EMBL" id="AP007203">
    <property type="protein sequence ID" value="BAD26553.1"/>
    <property type="status" value="ALT_SEQ"/>
    <property type="molecule type" value="Genomic_DNA"/>
</dbReference>
<dbReference type="EMBL" id="AP008208">
    <property type="protein sequence ID" value="BAF09500.2"/>
    <property type="molecule type" value="Genomic_DNA"/>
</dbReference>
<dbReference type="EMBL" id="AP014958">
    <property type="protein sequence ID" value="BAS80047.1"/>
    <property type="molecule type" value="Genomic_DNA"/>
</dbReference>
<dbReference type="RefSeq" id="XP_015625412.1">
    <property type="nucleotide sequence ID" value="XM_015769926.1"/>
</dbReference>
<dbReference type="SMR" id="Q6H3Z6"/>
<dbReference type="FunCoup" id="Q6H3Z6">
    <property type="interactions" value="44"/>
</dbReference>
<dbReference type="STRING" id="39947.Q6H3Z6"/>
<dbReference type="TCDB" id="2.A.67.2.11">
    <property type="family name" value="the oligopeptide transporter (opt) family"/>
</dbReference>
<dbReference type="PaxDb" id="39947-Q6H3Z6"/>
<dbReference type="EnsemblPlants" id="Os02t0649900-01">
    <property type="protein sequence ID" value="Os02t0649900-01"/>
    <property type="gene ID" value="Os02g0649900"/>
</dbReference>
<dbReference type="Gramene" id="Os02t0649900-01">
    <property type="protein sequence ID" value="Os02t0649900-01"/>
    <property type="gene ID" value="Os02g0649900"/>
</dbReference>
<dbReference type="KEGG" id="dosa:Os02g0649900"/>
<dbReference type="eggNOG" id="ENOG502QQ2H">
    <property type="taxonomic scope" value="Eukaryota"/>
</dbReference>
<dbReference type="HOGENOM" id="CLU_015477_2_1_1"/>
<dbReference type="InParanoid" id="Q6H3Z6"/>
<dbReference type="OMA" id="YHFTKVM"/>
<dbReference type="OrthoDB" id="627262at2759"/>
<dbReference type="BioCyc" id="MetaCyc:MONOMER-14021"/>
<dbReference type="PlantReactome" id="R-OSA-9025727">
    <property type="pathway name" value="Iron uptake and transport in root vascular system"/>
</dbReference>
<dbReference type="Proteomes" id="UP000000763">
    <property type="component" value="Chromosome 2"/>
</dbReference>
<dbReference type="Proteomes" id="UP000059680">
    <property type="component" value="Chromosome 2"/>
</dbReference>
<dbReference type="GO" id="GO:0005886">
    <property type="term" value="C:plasma membrane"/>
    <property type="evidence" value="ECO:0000318"/>
    <property type="project" value="GO_Central"/>
</dbReference>
<dbReference type="GO" id="GO:0051980">
    <property type="term" value="F:iron-nicotianamine transmembrane transporter activity"/>
    <property type="evidence" value="ECO:0000318"/>
    <property type="project" value="GO_Central"/>
</dbReference>
<dbReference type="GO" id="GO:0035673">
    <property type="term" value="F:oligopeptide transmembrane transporter activity"/>
    <property type="evidence" value="ECO:0007669"/>
    <property type="project" value="InterPro"/>
</dbReference>
<dbReference type="GO" id="GO:0010039">
    <property type="term" value="P:response to iron ion"/>
    <property type="evidence" value="ECO:0000318"/>
    <property type="project" value="GO_Central"/>
</dbReference>
<dbReference type="GO" id="GO:0048316">
    <property type="term" value="P:seed development"/>
    <property type="evidence" value="ECO:0000318"/>
    <property type="project" value="GO_Central"/>
</dbReference>
<dbReference type="InterPro" id="IPR004813">
    <property type="entry name" value="OPT"/>
</dbReference>
<dbReference type="InterPro" id="IPR045035">
    <property type="entry name" value="YSL-like"/>
</dbReference>
<dbReference type="NCBIfam" id="TIGR00728">
    <property type="entry name" value="OPT_sfam"/>
    <property type="match status" value="1"/>
</dbReference>
<dbReference type="PANTHER" id="PTHR31645:SF7">
    <property type="entry name" value="METAL-NICOTIANAMINE TRANSPORTER YSL2"/>
    <property type="match status" value="1"/>
</dbReference>
<dbReference type="PANTHER" id="PTHR31645">
    <property type="entry name" value="OLIGOPEPTIDE TRANSPORTER YGL114W-RELATED"/>
    <property type="match status" value="1"/>
</dbReference>
<dbReference type="Pfam" id="PF03169">
    <property type="entry name" value="OPT"/>
    <property type="match status" value="1"/>
</dbReference>